<keyword id="KW-0997">Cell inner membrane</keyword>
<keyword id="KW-1003">Cell membrane</keyword>
<keyword id="KW-0472">Membrane</keyword>
<keyword id="KW-0520">NAD</keyword>
<keyword id="KW-0874">Quinone</keyword>
<keyword id="KW-1185">Reference proteome</keyword>
<keyword id="KW-1278">Translocase</keyword>
<keyword id="KW-0812">Transmembrane</keyword>
<keyword id="KW-1133">Transmembrane helix</keyword>
<keyword id="KW-0813">Transport</keyword>
<keyword id="KW-0830">Ubiquinone</keyword>
<sequence length="102" mass="11228">MTLTLAHYLILGAILFAIGIFGIFLNRRNLIILLMSIELVLLAVNMNFVAFSSWFGDIAGQVFVFFILTVAAAEAAIGLAILVLLFRNLNTINVDELDRLKG</sequence>
<reference key="1">
    <citation type="journal article" date="2003" name="Nat. Genet.">
        <title>Comparative analysis of the genome sequences of Bordetella pertussis, Bordetella parapertussis and Bordetella bronchiseptica.</title>
        <authorList>
            <person name="Parkhill J."/>
            <person name="Sebaihia M."/>
            <person name="Preston A."/>
            <person name="Murphy L.D."/>
            <person name="Thomson N.R."/>
            <person name="Harris D.E."/>
            <person name="Holden M.T.G."/>
            <person name="Churcher C.M."/>
            <person name="Bentley S.D."/>
            <person name="Mungall K.L."/>
            <person name="Cerdeno-Tarraga A.-M."/>
            <person name="Temple L."/>
            <person name="James K.D."/>
            <person name="Harris B."/>
            <person name="Quail M.A."/>
            <person name="Achtman M."/>
            <person name="Atkin R."/>
            <person name="Baker S."/>
            <person name="Basham D."/>
            <person name="Bason N."/>
            <person name="Cherevach I."/>
            <person name="Chillingworth T."/>
            <person name="Collins M."/>
            <person name="Cronin A."/>
            <person name="Davis P."/>
            <person name="Doggett J."/>
            <person name="Feltwell T."/>
            <person name="Goble A."/>
            <person name="Hamlin N."/>
            <person name="Hauser H."/>
            <person name="Holroyd S."/>
            <person name="Jagels K."/>
            <person name="Leather S."/>
            <person name="Moule S."/>
            <person name="Norberczak H."/>
            <person name="O'Neil S."/>
            <person name="Ormond D."/>
            <person name="Price C."/>
            <person name="Rabbinowitsch E."/>
            <person name="Rutter S."/>
            <person name="Sanders M."/>
            <person name="Saunders D."/>
            <person name="Seeger K."/>
            <person name="Sharp S."/>
            <person name="Simmonds M."/>
            <person name="Skelton J."/>
            <person name="Squares R."/>
            <person name="Squares S."/>
            <person name="Stevens K."/>
            <person name="Unwin L."/>
            <person name="Whitehead S."/>
            <person name="Barrell B.G."/>
            <person name="Maskell D.J."/>
        </authorList>
    </citation>
    <scope>NUCLEOTIDE SEQUENCE [LARGE SCALE GENOMIC DNA]</scope>
    <source>
        <strain>Tohama I / ATCC BAA-589 / NCTC 13251</strain>
    </source>
</reference>
<protein>
    <recommendedName>
        <fullName evidence="1">NADH-quinone oxidoreductase subunit K</fullName>
        <ecNumber evidence="1">7.1.1.-</ecNumber>
    </recommendedName>
    <alternativeName>
        <fullName evidence="1">NADH dehydrogenase I subunit K</fullName>
    </alternativeName>
    <alternativeName>
        <fullName evidence="1">NDH-1 subunit K</fullName>
    </alternativeName>
</protein>
<dbReference type="EC" id="7.1.1.-" evidence="1"/>
<dbReference type="EMBL" id="BX640413">
    <property type="protein sequence ID" value="CAE41154.1"/>
    <property type="molecule type" value="Genomic_DNA"/>
</dbReference>
<dbReference type="RefSeq" id="NP_879661.1">
    <property type="nucleotide sequence ID" value="NC_002929.2"/>
</dbReference>
<dbReference type="RefSeq" id="WP_003813920.1">
    <property type="nucleotide sequence ID" value="NZ_CP039022.1"/>
</dbReference>
<dbReference type="SMR" id="Q7VZP5"/>
<dbReference type="STRING" id="257313.BP0851"/>
<dbReference type="PaxDb" id="257313-BP0851"/>
<dbReference type="GeneID" id="93205164"/>
<dbReference type="KEGG" id="bpe:BP0851"/>
<dbReference type="PATRIC" id="fig|257313.5.peg.905"/>
<dbReference type="eggNOG" id="COG0713">
    <property type="taxonomic scope" value="Bacteria"/>
</dbReference>
<dbReference type="HOGENOM" id="CLU_144724_2_0_4"/>
<dbReference type="Proteomes" id="UP000002676">
    <property type="component" value="Chromosome"/>
</dbReference>
<dbReference type="GO" id="GO:0030964">
    <property type="term" value="C:NADH dehydrogenase complex"/>
    <property type="evidence" value="ECO:0007669"/>
    <property type="project" value="TreeGrafter"/>
</dbReference>
<dbReference type="GO" id="GO:0005886">
    <property type="term" value="C:plasma membrane"/>
    <property type="evidence" value="ECO:0007669"/>
    <property type="project" value="UniProtKB-SubCell"/>
</dbReference>
<dbReference type="GO" id="GO:0050136">
    <property type="term" value="F:NADH:ubiquinone reductase (non-electrogenic) activity"/>
    <property type="evidence" value="ECO:0007669"/>
    <property type="project" value="UniProtKB-UniRule"/>
</dbReference>
<dbReference type="GO" id="GO:0048038">
    <property type="term" value="F:quinone binding"/>
    <property type="evidence" value="ECO:0007669"/>
    <property type="project" value="UniProtKB-KW"/>
</dbReference>
<dbReference type="GO" id="GO:0042773">
    <property type="term" value="P:ATP synthesis coupled electron transport"/>
    <property type="evidence" value="ECO:0007669"/>
    <property type="project" value="InterPro"/>
</dbReference>
<dbReference type="FunFam" id="1.10.287.3510:FF:000001">
    <property type="entry name" value="NADH-quinone oxidoreductase subunit K"/>
    <property type="match status" value="1"/>
</dbReference>
<dbReference type="Gene3D" id="1.10.287.3510">
    <property type="match status" value="1"/>
</dbReference>
<dbReference type="HAMAP" id="MF_01456">
    <property type="entry name" value="NDH1_NuoK"/>
    <property type="match status" value="1"/>
</dbReference>
<dbReference type="InterPro" id="IPR001133">
    <property type="entry name" value="NADH_UbQ_OxRdtase_chain4L/K"/>
</dbReference>
<dbReference type="InterPro" id="IPR039428">
    <property type="entry name" value="NUOK/Mnh_C1-like"/>
</dbReference>
<dbReference type="NCBIfam" id="NF004320">
    <property type="entry name" value="PRK05715.1-2"/>
    <property type="match status" value="1"/>
</dbReference>
<dbReference type="NCBIfam" id="NF004321">
    <property type="entry name" value="PRK05715.1-3"/>
    <property type="match status" value="1"/>
</dbReference>
<dbReference type="NCBIfam" id="NF004323">
    <property type="entry name" value="PRK05715.1-5"/>
    <property type="match status" value="1"/>
</dbReference>
<dbReference type="PANTHER" id="PTHR11434:SF21">
    <property type="entry name" value="NADH DEHYDROGENASE SUBUNIT 4L-RELATED"/>
    <property type="match status" value="1"/>
</dbReference>
<dbReference type="PANTHER" id="PTHR11434">
    <property type="entry name" value="NADH-UBIQUINONE OXIDOREDUCTASE SUBUNIT ND4L"/>
    <property type="match status" value="1"/>
</dbReference>
<dbReference type="Pfam" id="PF00420">
    <property type="entry name" value="Oxidored_q2"/>
    <property type="match status" value="1"/>
</dbReference>
<gene>
    <name evidence="1" type="primary">nuoK</name>
    <name type="ordered locus">BP0851</name>
</gene>
<accession>Q7VZP5</accession>
<comment type="function">
    <text evidence="1">NDH-1 shuttles electrons from NADH, via FMN and iron-sulfur (Fe-S) centers, to quinones in the respiratory chain. The immediate electron acceptor for the enzyme in this species is believed to be ubiquinone. Couples the redox reaction to proton translocation (for every two electrons transferred, four hydrogen ions are translocated across the cytoplasmic membrane), and thus conserves the redox energy in a proton gradient.</text>
</comment>
<comment type="catalytic activity">
    <reaction evidence="1">
        <text>a quinone + NADH + 5 H(+)(in) = a quinol + NAD(+) + 4 H(+)(out)</text>
        <dbReference type="Rhea" id="RHEA:57888"/>
        <dbReference type="ChEBI" id="CHEBI:15378"/>
        <dbReference type="ChEBI" id="CHEBI:24646"/>
        <dbReference type="ChEBI" id="CHEBI:57540"/>
        <dbReference type="ChEBI" id="CHEBI:57945"/>
        <dbReference type="ChEBI" id="CHEBI:132124"/>
    </reaction>
</comment>
<comment type="subunit">
    <text evidence="1">NDH-1 is composed of 14 different subunits. Subunits NuoA, H, J, K, L, M, N constitute the membrane sector of the complex.</text>
</comment>
<comment type="subcellular location">
    <subcellularLocation>
        <location evidence="1">Cell inner membrane</location>
        <topology evidence="1">Multi-pass membrane protein</topology>
    </subcellularLocation>
</comment>
<comment type="similarity">
    <text evidence="1">Belongs to the complex I subunit 4L family.</text>
</comment>
<feature type="chain" id="PRO_0000389965" description="NADH-quinone oxidoreductase subunit K">
    <location>
        <begin position="1"/>
        <end position="102"/>
    </location>
</feature>
<feature type="transmembrane region" description="Helical" evidence="1">
    <location>
        <begin position="5"/>
        <end position="25"/>
    </location>
</feature>
<feature type="transmembrane region" description="Helical" evidence="1">
    <location>
        <begin position="31"/>
        <end position="51"/>
    </location>
</feature>
<feature type="transmembrane region" description="Helical" evidence="1">
    <location>
        <begin position="62"/>
        <end position="82"/>
    </location>
</feature>
<organism>
    <name type="scientific">Bordetella pertussis (strain Tohama I / ATCC BAA-589 / NCTC 13251)</name>
    <dbReference type="NCBI Taxonomy" id="257313"/>
    <lineage>
        <taxon>Bacteria</taxon>
        <taxon>Pseudomonadati</taxon>
        <taxon>Pseudomonadota</taxon>
        <taxon>Betaproteobacteria</taxon>
        <taxon>Burkholderiales</taxon>
        <taxon>Alcaligenaceae</taxon>
        <taxon>Bordetella</taxon>
    </lineage>
</organism>
<evidence type="ECO:0000255" key="1">
    <source>
        <dbReference type="HAMAP-Rule" id="MF_01456"/>
    </source>
</evidence>
<name>NUOK_BORPE</name>
<proteinExistence type="inferred from homology"/>